<organism>
    <name type="scientific">Vibrio parahaemolyticus serotype O3:K6 (strain RIMD 2210633)</name>
    <dbReference type="NCBI Taxonomy" id="223926"/>
    <lineage>
        <taxon>Bacteria</taxon>
        <taxon>Pseudomonadati</taxon>
        <taxon>Pseudomonadota</taxon>
        <taxon>Gammaproteobacteria</taxon>
        <taxon>Vibrionales</taxon>
        <taxon>Vibrionaceae</taxon>
        <taxon>Vibrio</taxon>
    </lineage>
</organism>
<proteinExistence type="inferred from homology"/>
<gene>
    <name evidence="1" type="primary">rpmB</name>
    <name type="ordered locus">VP0185</name>
</gene>
<evidence type="ECO:0000255" key="1">
    <source>
        <dbReference type="HAMAP-Rule" id="MF_00373"/>
    </source>
</evidence>
<evidence type="ECO:0000256" key="2">
    <source>
        <dbReference type="SAM" id="MobiDB-lite"/>
    </source>
</evidence>
<evidence type="ECO:0000305" key="3"/>
<protein>
    <recommendedName>
        <fullName evidence="1">Large ribosomal subunit protein bL28</fullName>
    </recommendedName>
    <alternativeName>
        <fullName evidence="3">50S ribosomal protein L28</fullName>
    </alternativeName>
</protein>
<reference key="1">
    <citation type="journal article" date="2003" name="Lancet">
        <title>Genome sequence of Vibrio parahaemolyticus: a pathogenic mechanism distinct from that of V. cholerae.</title>
        <authorList>
            <person name="Makino K."/>
            <person name="Oshima K."/>
            <person name="Kurokawa K."/>
            <person name="Yokoyama K."/>
            <person name="Uda T."/>
            <person name="Tagomori K."/>
            <person name="Iijima Y."/>
            <person name="Najima M."/>
            <person name="Nakano M."/>
            <person name="Yamashita A."/>
            <person name="Kubota Y."/>
            <person name="Kimura S."/>
            <person name="Yasunaga T."/>
            <person name="Honda T."/>
            <person name="Shinagawa H."/>
            <person name="Hattori M."/>
            <person name="Iida T."/>
        </authorList>
    </citation>
    <scope>NUCLEOTIDE SEQUENCE [LARGE SCALE GENOMIC DNA]</scope>
    <source>
        <strain>RIMD 2210633</strain>
    </source>
</reference>
<sequence length="78" mass="9032">MSRVCQVTGKRPVTGNNRSHARNATKRRFLPNLQTHRFWVESEKRFVKLRLTAKGMRIIDKKGIDTVLADIRARGENV</sequence>
<accession>Q87T85</accession>
<keyword id="KW-0687">Ribonucleoprotein</keyword>
<keyword id="KW-0689">Ribosomal protein</keyword>
<dbReference type="EMBL" id="BA000031">
    <property type="protein sequence ID" value="BAC58448.1"/>
    <property type="molecule type" value="Genomic_DNA"/>
</dbReference>
<dbReference type="RefSeq" id="NP_796564.1">
    <property type="nucleotide sequence ID" value="NC_004603.1"/>
</dbReference>
<dbReference type="RefSeq" id="WP_005467944.1">
    <property type="nucleotide sequence ID" value="NC_004603.1"/>
</dbReference>
<dbReference type="SMR" id="Q87T85"/>
<dbReference type="GeneID" id="48229269"/>
<dbReference type="KEGG" id="vpa:VP0185"/>
<dbReference type="PATRIC" id="fig|223926.6.peg.177"/>
<dbReference type="eggNOG" id="COG0227">
    <property type="taxonomic scope" value="Bacteria"/>
</dbReference>
<dbReference type="HOGENOM" id="CLU_064548_3_1_6"/>
<dbReference type="Proteomes" id="UP000002493">
    <property type="component" value="Chromosome 1"/>
</dbReference>
<dbReference type="GO" id="GO:0022625">
    <property type="term" value="C:cytosolic large ribosomal subunit"/>
    <property type="evidence" value="ECO:0007669"/>
    <property type="project" value="TreeGrafter"/>
</dbReference>
<dbReference type="GO" id="GO:0003735">
    <property type="term" value="F:structural constituent of ribosome"/>
    <property type="evidence" value="ECO:0007669"/>
    <property type="project" value="InterPro"/>
</dbReference>
<dbReference type="GO" id="GO:0006412">
    <property type="term" value="P:translation"/>
    <property type="evidence" value="ECO:0007669"/>
    <property type="project" value="UniProtKB-UniRule"/>
</dbReference>
<dbReference type="FunFam" id="2.30.170.40:FF:000001">
    <property type="entry name" value="50S ribosomal protein L28"/>
    <property type="match status" value="1"/>
</dbReference>
<dbReference type="Gene3D" id="2.30.170.40">
    <property type="entry name" value="Ribosomal protein L28/L24"/>
    <property type="match status" value="1"/>
</dbReference>
<dbReference type="HAMAP" id="MF_00373">
    <property type="entry name" value="Ribosomal_bL28"/>
    <property type="match status" value="1"/>
</dbReference>
<dbReference type="InterPro" id="IPR026569">
    <property type="entry name" value="Ribosomal_bL28"/>
</dbReference>
<dbReference type="InterPro" id="IPR034704">
    <property type="entry name" value="Ribosomal_bL28/bL31-like_sf"/>
</dbReference>
<dbReference type="InterPro" id="IPR001383">
    <property type="entry name" value="Ribosomal_bL28_bact-type"/>
</dbReference>
<dbReference type="InterPro" id="IPR037147">
    <property type="entry name" value="Ribosomal_bL28_sf"/>
</dbReference>
<dbReference type="NCBIfam" id="TIGR00009">
    <property type="entry name" value="L28"/>
    <property type="match status" value="1"/>
</dbReference>
<dbReference type="PANTHER" id="PTHR13528">
    <property type="entry name" value="39S RIBOSOMAL PROTEIN L28, MITOCHONDRIAL"/>
    <property type="match status" value="1"/>
</dbReference>
<dbReference type="PANTHER" id="PTHR13528:SF2">
    <property type="entry name" value="LARGE RIBOSOMAL SUBUNIT PROTEIN BL28M"/>
    <property type="match status" value="1"/>
</dbReference>
<dbReference type="Pfam" id="PF00830">
    <property type="entry name" value="Ribosomal_L28"/>
    <property type="match status" value="1"/>
</dbReference>
<dbReference type="SUPFAM" id="SSF143800">
    <property type="entry name" value="L28p-like"/>
    <property type="match status" value="1"/>
</dbReference>
<name>RL28_VIBPA</name>
<feature type="chain" id="PRO_0000178586" description="Large ribosomal subunit protein bL28">
    <location>
        <begin position="1"/>
        <end position="78"/>
    </location>
</feature>
<feature type="region of interest" description="Disordered" evidence="2">
    <location>
        <begin position="1"/>
        <end position="20"/>
    </location>
</feature>
<comment type="similarity">
    <text evidence="1">Belongs to the bacterial ribosomal protein bL28 family.</text>
</comment>